<keyword id="KW-0998">Cell outer membrane</keyword>
<keyword id="KW-0472">Membrane</keyword>
<keyword id="KW-0732">Signal</keyword>
<keyword id="KW-0812">Transmembrane</keyword>
<keyword id="KW-1134">Transmembrane beta strand</keyword>
<keyword id="KW-0813">Transport</keyword>
<sequence length="452" mass="48605">MSERSVYMVLSPRFSVRAVSLAVAAVSASLSMPTSASMGNLGTSYGVMPVDVATAQSLSMFNEQVSATYYNPAALTKDPRGELTAGILHSEQELRSDNPNASGDIVSDSPSQHVLIGMKTNLGSLTRFGHPIYLGFIAGVEKYGKEMLAFSSETSESGQFLQYGKEPLFLNIGGATPIWRGISAGASVRVTLEATANLDAVSTLGGETSRERLAVNAEPSLKTILGTNIDLGSTFCPESDCFLNGWETALTYRTKSSASTTVDSNIIVTQTIPDPGLSLAVTTIDSFQPETIAIGTQYSGDGWRIGGSIEQQNWSELEDEFSGDSIKDQGSVASGNRIGFDDILIPRLGAEYQLNKNFAVRGGVAYEESPLKTTRNPELNYLDTDKLVVGLGISATYDRTRLLAYPVRLDLGYQYQQLQERDFTVVDYDGDETSVTADGDIHVFSGSITLKF</sequence>
<proteinExistence type="evidence at protein level"/>
<accession>H8WEC1</accession>
<dbReference type="EMBL" id="FO203363">
    <property type="protein sequence ID" value="CCG93977.1"/>
    <property type="molecule type" value="Genomic_DNA"/>
</dbReference>
<dbReference type="SMR" id="H8WEC1"/>
<dbReference type="KEGG" id="mhc:MARHY0478"/>
<dbReference type="PATRIC" id="fig|2743.3.peg.469"/>
<dbReference type="HOGENOM" id="CLU_615101_0_0_6"/>
<dbReference type="GO" id="GO:0009279">
    <property type="term" value="C:cell outer membrane"/>
    <property type="evidence" value="ECO:0007669"/>
    <property type="project" value="UniProtKB-SubCell"/>
</dbReference>
<dbReference type="GO" id="GO:0015483">
    <property type="term" value="F:long-chain fatty acid transporting porin activity"/>
    <property type="evidence" value="ECO:0007669"/>
    <property type="project" value="TreeGrafter"/>
</dbReference>
<dbReference type="Gene3D" id="2.40.160.60">
    <property type="entry name" value="Outer membrane protein transport protein (OMPP1/FadL/TodX)"/>
    <property type="match status" value="1"/>
</dbReference>
<dbReference type="InterPro" id="IPR053599">
    <property type="entry name" value="Alkane_Uptake_OmpP1/FadL"/>
</dbReference>
<dbReference type="InterPro" id="IPR005017">
    <property type="entry name" value="OMPP1/FadL/TodX"/>
</dbReference>
<dbReference type="NCBIfam" id="NF041571">
    <property type="entry name" value="alkn_up_AupA"/>
    <property type="match status" value="1"/>
</dbReference>
<dbReference type="PANTHER" id="PTHR35093">
    <property type="entry name" value="OUTER MEMBRANE PROTEIN NMB0088-RELATED"/>
    <property type="match status" value="1"/>
</dbReference>
<dbReference type="PANTHER" id="PTHR35093:SF8">
    <property type="entry name" value="OUTER MEMBRANE PROTEIN NMB0088-RELATED"/>
    <property type="match status" value="1"/>
</dbReference>
<dbReference type="Pfam" id="PF03349">
    <property type="entry name" value="Toluene_X"/>
    <property type="match status" value="1"/>
</dbReference>
<dbReference type="SUPFAM" id="SSF56935">
    <property type="entry name" value="Porins"/>
    <property type="match status" value="1"/>
</dbReference>
<organism>
    <name type="scientific">Marinobacter nauticus (strain ATCC 49840 / DSM 8798 / CIP 103578 / SP17)</name>
    <name type="common">Marinobacter hydrocarbonoclasticus</name>
    <dbReference type="NCBI Taxonomy" id="1163748"/>
    <lineage>
        <taxon>Bacteria</taxon>
        <taxon>Pseudomonadati</taxon>
        <taxon>Pseudomonadota</taxon>
        <taxon>Gammaproteobacteria</taxon>
        <taxon>Pseudomonadales</taxon>
        <taxon>Marinobacteraceae</taxon>
        <taxon>Marinobacter</taxon>
    </lineage>
</organism>
<gene>
    <name evidence="3" type="primary">aupA</name>
    <name evidence="5" type="ORF">MARHY0478</name>
</gene>
<feature type="signal peptide" evidence="1">
    <location>
        <begin position="1"/>
        <end position="36"/>
    </location>
</feature>
<feature type="chain" id="PRO_5003616267" description="Alkane uptake protein A">
    <location>
        <begin position="37"/>
        <end position="452"/>
    </location>
</feature>
<reference key="1">
    <citation type="journal article" date="2012" name="J. Bacteriol.">
        <title>Genome sequence of the marine bacterium Marinobacter hydrocarbonoclasticus SP17, which forms biofilms on hydrophobic organic compounds.</title>
        <authorList>
            <person name="Grimaud R."/>
            <person name="Ghiglione J.F."/>
            <person name="Cagnon C."/>
            <person name="Lauga B."/>
            <person name="Vaysse P.J."/>
            <person name="Rodriguez-Blanco A."/>
            <person name="Mangenot S."/>
            <person name="Cruveiller S."/>
            <person name="Barbe V."/>
            <person name="Duran R."/>
            <person name="Wu L.F."/>
            <person name="Talla E."/>
            <person name="Bonin P."/>
            <person name="Michotey V."/>
        </authorList>
    </citation>
    <scope>NUCLEOTIDE SEQUENCE [LARGE SCALE GENOMIC DNA]</scope>
    <source>
        <strain>ATCC 49840 / DSM 8798 / CIP 103578 / SP17</strain>
    </source>
</reference>
<reference key="2">
    <citation type="journal article" date="2018" name="MBio">
        <title>AupA and AupB are outer and inner membrane proteins involved in alkane uptake in Marinobacter hydrocarbonoclasticus SP17.</title>
        <authorList>
            <person name="Mounier J."/>
            <person name="Hakil F."/>
            <person name="Branchu P."/>
            <person name="Naitali M."/>
            <person name="Goulas P."/>
            <person name="Sivadon P."/>
            <person name="Grimaud R."/>
        </authorList>
    </citation>
    <scope>FUNCTION</scope>
    <scope>INTERACTION WITH AUPB</scope>
    <scope>SUBCELLULAR LOCATION</scope>
    <scope>INDUCTION</scope>
    <scope>DISRUPTION PHENOTYPE</scope>
    <source>
        <strain>ATCC 49840 / DSM 8798 / CIP 103578 / SP17</strain>
    </source>
</reference>
<name>AUPA_MARN1</name>
<protein>
    <recommendedName>
        <fullName evidence="3">Alkane uptake protein A</fullName>
    </recommendedName>
</protein>
<comment type="function">
    <text evidence="2">Required for growth on alkanes. Probably involved in the uptake of micelle-solubilized alkanes.</text>
</comment>
<comment type="subunit">
    <text evidence="2">Interacts with the inner membrane protein AupB.</text>
</comment>
<comment type="subcellular location">
    <subcellularLocation>
        <location evidence="2">Cell outer membrane</location>
        <topology evidence="4">Multi-pass membrane protein</topology>
    </subcellularLocation>
</comment>
<comment type="induction">
    <text evidence="2">Expression increases during biofilm formation on n-hexadecane. Forms an operon with aupB.</text>
</comment>
<comment type="disruption phenotype">
    <text evidence="2">Mutants show a lower rate of biofilm formation on solid paraffin and on the liquid alkane n-hexadecane, while growth on nonalkane substrates was not affected. Planktonic growth on water-soluble substrates is not affected. Mutants are impaired in the assimilation of n-hexadecane solubilized in surfactant micelles.</text>
</comment>
<comment type="similarity">
    <text evidence="4">Belongs to the OmpP1/FadL family.</text>
</comment>
<evidence type="ECO:0000255" key="1"/>
<evidence type="ECO:0000269" key="2">
    <source>
    </source>
</evidence>
<evidence type="ECO:0000303" key="3">
    <source>
    </source>
</evidence>
<evidence type="ECO:0000305" key="4"/>
<evidence type="ECO:0000312" key="5">
    <source>
        <dbReference type="EMBL" id="CCG93977.1"/>
    </source>
</evidence>